<name>CCMA_SHEON</name>
<gene>
    <name evidence="1" type="primary">ccmA</name>
    <name type="ordered locus">SO_0263</name>
</gene>
<keyword id="KW-0067">ATP-binding</keyword>
<keyword id="KW-0997">Cell inner membrane</keyword>
<keyword id="KW-1003">Cell membrane</keyword>
<keyword id="KW-0201">Cytochrome c-type biogenesis</keyword>
<keyword id="KW-0472">Membrane</keyword>
<keyword id="KW-0547">Nucleotide-binding</keyword>
<keyword id="KW-1185">Reference proteome</keyword>
<keyword id="KW-1278">Translocase</keyword>
<keyword id="KW-0813">Transport</keyword>
<accession>Q8EK40</accession>
<accession>O52686</accession>
<dbReference type="EC" id="7.6.2.5" evidence="1"/>
<dbReference type="EMBL" id="AF044582">
    <property type="protein sequence ID" value="AAC02693.1"/>
    <property type="molecule type" value="Genomic_DNA"/>
</dbReference>
<dbReference type="EMBL" id="AE014299">
    <property type="protein sequence ID" value="AAN53348.1"/>
    <property type="molecule type" value="Genomic_DNA"/>
</dbReference>
<dbReference type="RefSeq" id="NP_715903.1">
    <property type="nucleotide sequence ID" value="NC_004347.2"/>
</dbReference>
<dbReference type="RefSeq" id="WP_011070637.1">
    <property type="nucleotide sequence ID" value="NC_004347.2"/>
</dbReference>
<dbReference type="SMR" id="Q8EK40"/>
<dbReference type="STRING" id="211586.SO_0263"/>
<dbReference type="PaxDb" id="211586-SO_0263"/>
<dbReference type="KEGG" id="son:SO_0263"/>
<dbReference type="PATRIC" id="fig|211586.12.peg.254"/>
<dbReference type="eggNOG" id="COG4133">
    <property type="taxonomic scope" value="Bacteria"/>
</dbReference>
<dbReference type="HOGENOM" id="CLU_000604_1_2_6"/>
<dbReference type="OrthoDB" id="9800654at2"/>
<dbReference type="PhylomeDB" id="Q8EK40"/>
<dbReference type="BioCyc" id="SONE211586:G1GMP-252-MONOMER"/>
<dbReference type="Proteomes" id="UP000008186">
    <property type="component" value="Chromosome"/>
</dbReference>
<dbReference type="GO" id="GO:0005886">
    <property type="term" value="C:plasma membrane"/>
    <property type="evidence" value="ECO:0007669"/>
    <property type="project" value="UniProtKB-SubCell"/>
</dbReference>
<dbReference type="GO" id="GO:0015439">
    <property type="term" value="F:ABC-type heme transporter activity"/>
    <property type="evidence" value="ECO:0007669"/>
    <property type="project" value="UniProtKB-EC"/>
</dbReference>
<dbReference type="GO" id="GO:0005524">
    <property type="term" value="F:ATP binding"/>
    <property type="evidence" value="ECO:0007669"/>
    <property type="project" value="UniProtKB-KW"/>
</dbReference>
<dbReference type="GO" id="GO:0016887">
    <property type="term" value="F:ATP hydrolysis activity"/>
    <property type="evidence" value="ECO:0007669"/>
    <property type="project" value="InterPro"/>
</dbReference>
<dbReference type="GO" id="GO:0017004">
    <property type="term" value="P:cytochrome complex assembly"/>
    <property type="evidence" value="ECO:0007669"/>
    <property type="project" value="UniProtKB-KW"/>
</dbReference>
<dbReference type="Gene3D" id="3.40.50.300">
    <property type="entry name" value="P-loop containing nucleotide triphosphate hydrolases"/>
    <property type="match status" value="1"/>
</dbReference>
<dbReference type="InterPro" id="IPR003593">
    <property type="entry name" value="AAA+_ATPase"/>
</dbReference>
<dbReference type="InterPro" id="IPR003439">
    <property type="entry name" value="ABC_transporter-like_ATP-bd"/>
</dbReference>
<dbReference type="InterPro" id="IPR005895">
    <property type="entry name" value="ABC_transptr_haem_export_CcmA"/>
</dbReference>
<dbReference type="InterPro" id="IPR027417">
    <property type="entry name" value="P-loop_NTPase"/>
</dbReference>
<dbReference type="NCBIfam" id="TIGR01189">
    <property type="entry name" value="ccmA"/>
    <property type="match status" value="1"/>
</dbReference>
<dbReference type="NCBIfam" id="NF010061">
    <property type="entry name" value="PRK13538.1"/>
    <property type="match status" value="1"/>
</dbReference>
<dbReference type="PANTHER" id="PTHR43499">
    <property type="entry name" value="ABC TRANSPORTER I FAMILY MEMBER 1"/>
    <property type="match status" value="1"/>
</dbReference>
<dbReference type="PANTHER" id="PTHR43499:SF1">
    <property type="entry name" value="ABC TRANSPORTER I FAMILY MEMBER 1"/>
    <property type="match status" value="1"/>
</dbReference>
<dbReference type="Pfam" id="PF00005">
    <property type="entry name" value="ABC_tran"/>
    <property type="match status" value="1"/>
</dbReference>
<dbReference type="SMART" id="SM00382">
    <property type="entry name" value="AAA"/>
    <property type="match status" value="1"/>
</dbReference>
<dbReference type="SUPFAM" id="SSF52540">
    <property type="entry name" value="P-loop containing nucleoside triphosphate hydrolases"/>
    <property type="match status" value="1"/>
</dbReference>
<dbReference type="PROSITE" id="PS50893">
    <property type="entry name" value="ABC_TRANSPORTER_2"/>
    <property type="match status" value="1"/>
</dbReference>
<dbReference type="PROSITE" id="PS51243">
    <property type="entry name" value="CCMA"/>
    <property type="match status" value="1"/>
</dbReference>
<organism>
    <name type="scientific">Shewanella oneidensis (strain ATCC 700550 / JCM 31522 / CIP 106686 / LMG 19005 / NCIMB 14063 / MR-1)</name>
    <dbReference type="NCBI Taxonomy" id="211586"/>
    <lineage>
        <taxon>Bacteria</taxon>
        <taxon>Pseudomonadati</taxon>
        <taxon>Pseudomonadota</taxon>
        <taxon>Gammaproteobacteria</taxon>
        <taxon>Alteromonadales</taxon>
        <taxon>Shewanellaceae</taxon>
        <taxon>Shewanella</taxon>
    </lineage>
</organism>
<evidence type="ECO:0000255" key="1">
    <source>
        <dbReference type="HAMAP-Rule" id="MF_01707"/>
    </source>
</evidence>
<evidence type="ECO:0000305" key="2"/>
<protein>
    <recommendedName>
        <fullName evidence="1">Cytochrome c biogenesis ATP-binding export protein CcmA</fullName>
        <ecNumber evidence="1">7.6.2.5</ecNumber>
    </recommendedName>
    <alternativeName>
        <fullName evidence="1">Heme exporter protein A</fullName>
    </alternativeName>
</protein>
<reference key="1">
    <citation type="submission" date="1998-01" db="EMBL/GenBank/DDBJ databases">
        <title>Cytochrome c maturation in the metal reducer Shewanella putrefaciens.</title>
        <authorList>
            <person name="Saffarini D.A."/>
            <person name="McCool J."/>
            <person name="Tsongalis J."/>
        </authorList>
    </citation>
    <scope>NUCLEOTIDE SEQUENCE [GENOMIC DNA]</scope>
    <source>
        <strain>ATCC 700550 / JCM 31522 / CIP 106686 / LMG 19005 / NCIMB 14063 / MR-1</strain>
    </source>
</reference>
<reference key="2">
    <citation type="journal article" date="2002" name="Nat. Biotechnol.">
        <title>Genome sequence of the dissimilatory metal ion-reducing bacterium Shewanella oneidensis.</title>
        <authorList>
            <person name="Heidelberg J.F."/>
            <person name="Paulsen I.T."/>
            <person name="Nelson K.E."/>
            <person name="Gaidos E.J."/>
            <person name="Nelson W.C."/>
            <person name="Read T.D."/>
            <person name="Eisen J.A."/>
            <person name="Seshadri R."/>
            <person name="Ward N.L."/>
            <person name="Methe B.A."/>
            <person name="Clayton R.A."/>
            <person name="Meyer T."/>
            <person name="Tsapin A."/>
            <person name="Scott J."/>
            <person name="Beanan M.J."/>
            <person name="Brinkac L.M."/>
            <person name="Daugherty S.C."/>
            <person name="DeBoy R.T."/>
            <person name="Dodson R.J."/>
            <person name="Durkin A.S."/>
            <person name="Haft D.H."/>
            <person name="Kolonay J.F."/>
            <person name="Madupu R."/>
            <person name="Peterson J.D."/>
            <person name="Umayam L.A."/>
            <person name="White O."/>
            <person name="Wolf A.M."/>
            <person name="Vamathevan J.J."/>
            <person name="Weidman J.F."/>
            <person name="Impraim M."/>
            <person name="Lee K."/>
            <person name="Berry K.J."/>
            <person name="Lee C."/>
            <person name="Mueller J."/>
            <person name="Khouri H.M."/>
            <person name="Gill J."/>
            <person name="Utterback T.R."/>
            <person name="McDonald L.A."/>
            <person name="Feldblyum T.V."/>
            <person name="Smith H.O."/>
            <person name="Venter J.C."/>
            <person name="Nealson K.H."/>
            <person name="Fraser C.M."/>
        </authorList>
    </citation>
    <scope>NUCLEOTIDE SEQUENCE [LARGE SCALE GENOMIC DNA]</scope>
    <source>
        <strain>ATCC 700550 / JCM 31522 / CIP 106686 / LMG 19005 / NCIMB 14063 / MR-1</strain>
    </source>
</reference>
<sequence length="216" mass="24373">MTNIISVDTLLSASKLTCIREERILFDELSFEINAGDIVQIEGPNGAGKTSLLRILAGLSRPYAGQTFYVNEDINRCRDEYNEDLLYLGHLAGVKSELTAEENLNFNLRISGYDDFDTSAILAKVNLSGFEEALAGHLSAGQHRRTALARLWHNDCKIWILDEPFTAIDKRGVEELEQLFIKHADNGGCVILTTHQDMGIIKDDRLRKIRLDYRFV</sequence>
<comment type="function">
    <text evidence="1">Part of the ABC transporter complex CcmAB involved in the biogenesis of c-type cytochromes; once thought to export heme, this seems not to be the case, but its exact role is uncertain. Responsible for energy coupling to the transport system.</text>
</comment>
<comment type="catalytic activity">
    <reaction evidence="1">
        <text>heme b(in) + ATP + H2O = heme b(out) + ADP + phosphate + H(+)</text>
        <dbReference type="Rhea" id="RHEA:19261"/>
        <dbReference type="ChEBI" id="CHEBI:15377"/>
        <dbReference type="ChEBI" id="CHEBI:15378"/>
        <dbReference type="ChEBI" id="CHEBI:30616"/>
        <dbReference type="ChEBI" id="CHEBI:43474"/>
        <dbReference type="ChEBI" id="CHEBI:60344"/>
        <dbReference type="ChEBI" id="CHEBI:456216"/>
        <dbReference type="EC" id="7.6.2.5"/>
    </reaction>
</comment>
<comment type="subunit">
    <text evidence="1">The complex is composed of two ATP-binding proteins (CcmA) and two transmembrane proteins (CcmB).</text>
</comment>
<comment type="subcellular location">
    <subcellularLocation>
        <location evidence="1">Cell inner membrane</location>
        <topology evidence="1">Peripheral membrane protein</topology>
    </subcellularLocation>
</comment>
<comment type="similarity">
    <text evidence="1">Belongs to the ABC transporter superfamily. CcmA exporter (TC 3.A.1.107) family.</text>
</comment>
<proteinExistence type="inferred from homology"/>
<feature type="chain" id="PRO_0000092214" description="Cytochrome c biogenesis ATP-binding export protein CcmA">
    <location>
        <begin position="1"/>
        <end position="216"/>
    </location>
</feature>
<feature type="domain" description="ABC transporter" evidence="1">
    <location>
        <begin position="5"/>
        <end position="216"/>
    </location>
</feature>
<feature type="binding site" evidence="1">
    <location>
        <begin position="43"/>
        <end position="50"/>
    </location>
    <ligand>
        <name>ATP</name>
        <dbReference type="ChEBI" id="CHEBI:30616"/>
    </ligand>
</feature>
<feature type="sequence conflict" description="In Ref. 1; AAC02693." evidence="2" ref="1">
    <original>LSFEINAGDIV</original>
    <variation>FKFLRLMRAISS</variation>
    <location>
        <begin position="29"/>
        <end position="39"/>
    </location>
</feature>